<dbReference type="EC" id="3.6.1.66" evidence="1"/>
<dbReference type="EMBL" id="CH408033">
    <property type="protein sequence ID" value="EAQ86540.1"/>
    <property type="molecule type" value="Genomic_DNA"/>
</dbReference>
<dbReference type="RefSeq" id="XP_001225449.1">
    <property type="nucleotide sequence ID" value="XM_001225448.1"/>
</dbReference>
<dbReference type="SMR" id="Q2GW61"/>
<dbReference type="FunCoup" id="Q2GW61">
    <property type="interactions" value="646"/>
</dbReference>
<dbReference type="STRING" id="306901.Q2GW61"/>
<dbReference type="GeneID" id="4394335"/>
<dbReference type="VEuPathDB" id="FungiDB:CHGG_07793"/>
<dbReference type="eggNOG" id="KOG3222">
    <property type="taxonomic scope" value="Eukaryota"/>
</dbReference>
<dbReference type="HOGENOM" id="CLU_082080_1_1_1"/>
<dbReference type="InParanoid" id="Q2GW61"/>
<dbReference type="OMA" id="YDPIFQP"/>
<dbReference type="OrthoDB" id="6288734at2759"/>
<dbReference type="Proteomes" id="UP000001056">
    <property type="component" value="Unassembled WGS sequence"/>
</dbReference>
<dbReference type="GO" id="GO:0005737">
    <property type="term" value="C:cytoplasm"/>
    <property type="evidence" value="ECO:0007669"/>
    <property type="project" value="UniProtKB-SubCell"/>
</dbReference>
<dbReference type="GO" id="GO:0005634">
    <property type="term" value="C:nucleus"/>
    <property type="evidence" value="ECO:0007669"/>
    <property type="project" value="UniProtKB-SubCell"/>
</dbReference>
<dbReference type="GO" id="GO:0035870">
    <property type="term" value="F:dITP diphosphatase activity"/>
    <property type="evidence" value="ECO:0007669"/>
    <property type="project" value="RHEA"/>
</dbReference>
<dbReference type="GO" id="GO:0036220">
    <property type="term" value="F:ITP diphosphatase activity"/>
    <property type="evidence" value="ECO:0007669"/>
    <property type="project" value="RHEA"/>
</dbReference>
<dbReference type="GO" id="GO:0046872">
    <property type="term" value="F:metal ion binding"/>
    <property type="evidence" value="ECO:0007669"/>
    <property type="project" value="UniProtKB-KW"/>
</dbReference>
<dbReference type="GO" id="GO:0000166">
    <property type="term" value="F:nucleotide binding"/>
    <property type="evidence" value="ECO:0007669"/>
    <property type="project" value="UniProtKB-KW"/>
</dbReference>
<dbReference type="GO" id="GO:0036222">
    <property type="term" value="F:XTP diphosphatase activity"/>
    <property type="evidence" value="ECO:0007669"/>
    <property type="project" value="RHEA"/>
</dbReference>
<dbReference type="GO" id="GO:0009204">
    <property type="term" value="P:deoxyribonucleoside triphosphate catabolic process"/>
    <property type="evidence" value="ECO:0007669"/>
    <property type="project" value="UniProtKB-UniRule"/>
</dbReference>
<dbReference type="GO" id="GO:0009117">
    <property type="term" value="P:nucleotide metabolic process"/>
    <property type="evidence" value="ECO:0007669"/>
    <property type="project" value="UniProtKB-KW"/>
</dbReference>
<dbReference type="CDD" id="cd00515">
    <property type="entry name" value="HAM1"/>
    <property type="match status" value="1"/>
</dbReference>
<dbReference type="FunFam" id="3.90.950.10:FF:000003">
    <property type="entry name" value="Inosine triphosphate pyrophosphatase"/>
    <property type="match status" value="1"/>
</dbReference>
<dbReference type="Gene3D" id="3.90.950.10">
    <property type="match status" value="1"/>
</dbReference>
<dbReference type="HAMAP" id="MF_03148">
    <property type="entry name" value="HAM1_NTPase"/>
    <property type="match status" value="1"/>
</dbReference>
<dbReference type="InterPro" id="IPR027502">
    <property type="entry name" value="ITPase"/>
</dbReference>
<dbReference type="InterPro" id="IPR029001">
    <property type="entry name" value="ITPase-like_fam"/>
</dbReference>
<dbReference type="InterPro" id="IPR002637">
    <property type="entry name" value="RdgB/HAM1"/>
</dbReference>
<dbReference type="NCBIfam" id="TIGR00042">
    <property type="entry name" value="RdgB/HAM1 family non-canonical purine NTP pyrophosphatase"/>
    <property type="match status" value="1"/>
</dbReference>
<dbReference type="PANTHER" id="PTHR11067:SF9">
    <property type="entry name" value="INOSINE TRIPHOSPHATE PYROPHOSPHATASE"/>
    <property type="match status" value="1"/>
</dbReference>
<dbReference type="PANTHER" id="PTHR11067">
    <property type="entry name" value="INOSINE TRIPHOSPHATE PYROPHOSPHATASE/HAM1 PROTEIN"/>
    <property type="match status" value="1"/>
</dbReference>
<dbReference type="Pfam" id="PF01725">
    <property type="entry name" value="Ham1p_like"/>
    <property type="match status" value="1"/>
</dbReference>
<dbReference type="SUPFAM" id="SSF52972">
    <property type="entry name" value="ITPase-like"/>
    <property type="match status" value="1"/>
</dbReference>
<gene>
    <name type="ORF">CHGG_07793</name>
</gene>
<accession>Q2GW61</accession>
<evidence type="ECO:0000255" key="1">
    <source>
        <dbReference type="HAMAP-Rule" id="MF_03148"/>
    </source>
</evidence>
<sequence length="191" mass="21052">MTTPTAARHMVNFITGNTNKLCEVRAILQPAIQVESQTLDLIEIQGTLEEVTLDKCRRAADLVEGPVLVEDTCLCFNALNGLPGPYIKWFMKSLGHTGLNNLLAAYEDKSAQAVCTFAYSAGPGHEPILFQGITDGKIVPARGPGDFGWDAIFEYEGQTYAEMDKAAKNKISHRYRALAKLQEWFAKEMAP</sequence>
<keyword id="KW-0963">Cytoplasm</keyword>
<keyword id="KW-0378">Hydrolase</keyword>
<keyword id="KW-0460">Magnesium</keyword>
<keyword id="KW-0464">Manganese</keyword>
<keyword id="KW-0479">Metal-binding</keyword>
<keyword id="KW-0546">Nucleotide metabolism</keyword>
<keyword id="KW-0547">Nucleotide-binding</keyword>
<keyword id="KW-0539">Nucleus</keyword>
<keyword id="KW-1185">Reference proteome</keyword>
<proteinExistence type="inferred from homology"/>
<organism>
    <name type="scientific">Chaetomium globosum (strain ATCC 6205 / CBS 148.51 / DSM 1962 / NBRC 6347 / NRRL 1970)</name>
    <name type="common">Soil fungus</name>
    <dbReference type="NCBI Taxonomy" id="306901"/>
    <lineage>
        <taxon>Eukaryota</taxon>
        <taxon>Fungi</taxon>
        <taxon>Dikarya</taxon>
        <taxon>Ascomycota</taxon>
        <taxon>Pezizomycotina</taxon>
        <taxon>Sordariomycetes</taxon>
        <taxon>Sordariomycetidae</taxon>
        <taxon>Sordariales</taxon>
        <taxon>Chaetomiaceae</taxon>
        <taxon>Chaetomium</taxon>
    </lineage>
</organism>
<comment type="function">
    <text evidence="1">Pyrophosphatase that hydrolyzes non-canonical purine nucleotides such as inosine triphosphate (ITP), deoxyinosine triphosphate (dITP) or xanthosine 5'-triphosphate (XTP) to their respective monophosphate derivatives. The enzyme does not distinguish between the deoxy- and ribose forms. Probably excludes non-canonical purines from RNA and DNA precursor pools, thus preventing their incorporation into RNA and DNA and avoiding chromosomal lesions.</text>
</comment>
<comment type="catalytic activity">
    <reaction evidence="1">
        <text>ITP + H2O = IMP + diphosphate + H(+)</text>
        <dbReference type="Rhea" id="RHEA:29399"/>
        <dbReference type="ChEBI" id="CHEBI:15377"/>
        <dbReference type="ChEBI" id="CHEBI:15378"/>
        <dbReference type="ChEBI" id="CHEBI:33019"/>
        <dbReference type="ChEBI" id="CHEBI:58053"/>
        <dbReference type="ChEBI" id="CHEBI:61402"/>
        <dbReference type="EC" id="3.6.1.66"/>
    </reaction>
    <physiologicalReaction direction="left-to-right" evidence="1">
        <dbReference type="Rhea" id="RHEA:29400"/>
    </physiologicalReaction>
</comment>
<comment type="catalytic activity">
    <reaction evidence="1">
        <text>dITP + H2O = dIMP + diphosphate + H(+)</text>
        <dbReference type="Rhea" id="RHEA:28342"/>
        <dbReference type="ChEBI" id="CHEBI:15377"/>
        <dbReference type="ChEBI" id="CHEBI:15378"/>
        <dbReference type="ChEBI" id="CHEBI:33019"/>
        <dbReference type="ChEBI" id="CHEBI:61194"/>
        <dbReference type="ChEBI" id="CHEBI:61382"/>
        <dbReference type="EC" id="3.6.1.66"/>
    </reaction>
    <physiologicalReaction direction="left-to-right" evidence="1">
        <dbReference type="Rhea" id="RHEA:28343"/>
    </physiologicalReaction>
</comment>
<comment type="catalytic activity">
    <reaction evidence="1">
        <text>XTP + H2O = XMP + diphosphate + H(+)</text>
        <dbReference type="Rhea" id="RHEA:28610"/>
        <dbReference type="ChEBI" id="CHEBI:15377"/>
        <dbReference type="ChEBI" id="CHEBI:15378"/>
        <dbReference type="ChEBI" id="CHEBI:33019"/>
        <dbReference type="ChEBI" id="CHEBI:57464"/>
        <dbReference type="ChEBI" id="CHEBI:61314"/>
        <dbReference type="EC" id="3.6.1.66"/>
    </reaction>
    <physiologicalReaction direction="left-to-right" evidence="1">
        <dbReference type="Rhea" id="RHEA:28611"/>
    </physiologicalReaction>
</comment>
<comment type="cofactor">
    <cofactor evidence="1">
        <name>Mg(2+)</name>
        <dbReference type="ChEBI" id="CHEBI:18420"/>
    </cofactor>
    <cofactor evidence="1">
        <name>Mn(2+)</name>
        <dbReference type="ChEBI" id="CHEBI:29035"/>
    </cofactor>
    <text evidence="1">Binds 1 divalent metal cation per subunit; can use either Mg(2+) or Mn(2+).</text>
</comment>
<comment type="subunit">
    <text evidence="1">Homodimer.</text>
</comment>
<comment type="subcellular location">
    <subcellularLocation>
        <location evidence="1">Cytoplasm</location>
    </subcellularLocation>
    <subcellularLocation>
        <location evidence="1">Nucleus</location>
    </subcellularLocation>
</comment>
<comment type="similarity">
    <text evidence="1">Belongs to the HAM1 NTPase family.</text>
</comment>
<protein>
    <recommendedName>
        <fullName evidence="1">Inosine triphosphate pyrophosphatase</fullName>
        <shortName evidence="1">ITPase</shortName>
        <shortName evidence="1">Inosine triphosphatase</shortName>
        <ecNumber evidence="1">3.6.1.66</ecNumber>
    </recommendedName>
    <alternativeName>
        <fullName evidence="1">Non-canonical purine NTP pyrophosphatase</fullName>
    </alternativeName>
    <alternativeName>
        <fullName evidence="1">Non-standard purine NTP pyrophosphatase</fullName>
    </alternativeName>
    <alternativeName>
        <fullName evidence="1">Nucleoside-triphosphate diphosphatase</fullName>
    </alternativeName>
    <alternativeName>
        <fullName evidence="1">Nucleoside-triphosphate pyrophosphatase</fullName>
        <shortName evidence="1">NTPase</shortName>
    </alternativeName>
    <alternativeName>
        <fullName evidence="1">XTP/dITP diphosphatase</fullName>
    </alternativeName>
</protein>
<reference key="1">
    <citation type="journal article" date="2015" name="Genome Announc.">
        <title>Draft genome sequence of the cellulolytic fungus Chaetomium globosum.</title>
        <authorList>
            <person name="Cuomo C.A."/>
            <person name="Untereiner W.A."/>
            <person name="Ma L.-J."/>
            <person name="Grabherr M."/>
            <person name="Birren B.W."/>
        </authorList>
    </citation>
    <scope>NUCLEOTIDE SEQUENCE [LARGE SCALE GENOMIC DNA]</scope>
    <source>
        <strain>ATCC 6205 / CBS 148.51 / DSM 1962 / NBRC 6347 / NRRL 1970</strain>
    </source>
</reference>
<name>ITPA_CHAGB</name>
<feature type="chain" id="PRO_0000413133" description="Inosine triphosphate pyrophosphatase">
    <location>
        <begin position="1"/>
        <end position="191"/>
    </location>
</feature>
<feature type="binding site" evidence="1">
    <location>
        <begin position="15"/>
        <end position="20"/>
    </location>
    <ligand>
        <name>ITP</name>
        <dbReference type="ChEBI" id="CHEBI:61402"/>
    </ligand>
</feature>
<feature type="binding site" evidence="1">
    <location>
        <position position="43"/>
    </location>
    <ligand>
        <name>Mg(2+)</name>
        <dbReference type="ChEBI" id="CHEBI:18420"/>
    </ligand>
</feature>
<feature type="binding site" evidence="1">
    <location>
        <position position="55"/>
    </location>
    <ligand>
        <name>ITP</name>
        <dbReference type="ChEBI" id="CHEBI:61402"/>
    </ligand>
</feature>
<feature type="binding site" evidence="1">
    <location>
        <begin position="71"/>
        <end position="72"/>
    </location>
    <ligand>
        <name>ITP</name>
        <dbReference type="ChEBI" id="CHEBI:61402"/>
    </ligand>
</feature>
<feature type="binding site" evidence="1">
    <location>
        <position position="88"/>
    </location>
    <ligand>
        <name>ITP</name>
        <dbReference type="ChEBI" id="CHEBI:61402"/>
    </ligand>
</feature>
<feature type="binding site" evidence="1">
    <location>
        <begin position="147"/>
        <end position="150"/>
    </location>
    <ligand>
        <name>ITP</name>
        <dbReference type="ChEBI" id="CHEBI:61402"/>
    </ligand>
</feature>
<feature type="binding site" evidence="1">
    <location>
        <position position="168"/>
    </location>
    <ligand>
        <name>ITP</name>
        <dbReference type="ChEBI" id="CHEBI:61402"/>
    </ligand>
</feature>
<feature type="binding site" evidence="1">
    <location>
        <begin position="173"/>
        <end position="174"/>
    </location>
    <ligand>
        <name>ITP</name>
        <dbReference type="ChEBI" id="CHEBI:61402"/>
    </ligand>
</feature>